<protein>
    <recommendedName>
        <fullName evidence="1">Glucose-6-phosphate isomerase</fullName>
        <shortName evidence="1">GPI</shortName>
        <ecNumber evidence="1">5.3.1.9</ecNumber>
    </recommendedName>
    <alternativeName>
        <fullName evidence="1">Phosphoglucose isomerase</fullName>
        <shortName evidence="1">PGI</shortName>
    </alternativeName>
    <alternativeName>
        <fullName evidence="1">Phosphohexose isomerase</fullName>
        <shortName evidence="1">PHI</shortName>
    </alternativeName>
</protein>
<gene>
    <name evidence="1" type="primary">pgi</name>
    <name type="ordered locus">Rsph17025_1776</name>
</gene>
<feature type="chain" id="PRO_1000014009" description="Glucose-6-phosphate isomerase">
    <location>
        <begin position="1"/>
        <end position="533"/>
    </location>
</feature>
<feature type="active site" description="Proton donor" evidence="1">
    <location>
        <position position="341"/>
    </location>
</feature>
<feature type="active site" evidence="1">
    <location>
        <position position="372"/>
    </location>
</feature>
<feature type="active site" evidence="1">
    <location>
        <position position="501"/>
    </location>
</feature>
<accession>A4WTF5</accession>
<sequence length="533" mass="58341">MKQIWQALKAHQQAVEHRPILDLFADPRRAESFSTRLDDMLFDWSKTNIDHTARDLLIDLAGAAGVSQKRDAMFAGRKINETEGRAVLHTALRNMDRPVLVEGQDVAAGLRETHARMQAFAHDLREGLFTGQGGRITDVVNIGIGGSDLGPAMACLALAPYADGPRCHFVSNVDGAHIHDTLKDLDPATTLVIVASKTFTTIETMTNAETARRWMEGRVANPAAQFAAVSTAADRTAAFGIDASRVFGFEDWVGGRYSMWGPIGLSLMIAIGPEDFDAFLSGGAAMDRHFREAPFAENLPVLLALVGIWHNQICGHATRAVLPYDQRLARLPAYLQQLEMESNGKRVAMDGHELALHSGPIVWGEPGTNGQHAFYQLIHQGTRVVPCEFLVARDGHEPDLAHQHLLLVSNCLAQSEALLRGRSLDEARAILAKKGVTGTELERQARHRVFPGNRPSTTLAYPKLTPAMLGRIIALYEHRVFVEGVILGINSYDQWGVELGKELAIALQPMLEGRAGTEGKDGSTRQLIDFLGR</sequence>
<keyword id="KW-0963">Cytoplasm</keyword>
<keyword id="KW-0312">Gluconeogenesis</keyword>
<keyword id="KW-0324">Glycolysis</keyword>
<keyword id="KW-0413">Isomerase</keyword>
<organism>
    <name type="scientific">Cereibacter sphaeroides (strain ATCC 17025 / ATH 2.4.3)</name>
    <name type="common">Rhodobacter sphaeroides</name>
    <dbReference type="NCBI Taxonomy" id="349102"/>
    <lineage>
        <taxon>Bacteria</taxon>
        <taxon>Pseudomonadati</taxon>
        <taxon>Pseudomonadota</taxon>
        <taxon>Alphaproteobacteria</taxon>
        <taxon>Rhodobacterales</taxon>
        <taxon>Paracoccaceae</taxon>
        <taxon>Cereibacter</taxon>
    </lineage>
</organism>
<proteinExistence type="inferred from homology"/>
<name>G6PI_CERS5</name>
<comment type="function">
    <text evidence="1">Catalyzes the reversible isomerization of glucose-6-phosphate to fructose-6-phosphate.</text>
</comment>
<comment type="catalytic activity">
    <reaction evidence="1">
        <text>alpha-D-glucose 6-phosphate = beta-D-fructose 6-phosphate</text>
        <dbReference type="Rhea" id="RHEA:11816"/>
        <dbReference type="ChEBI" id="CHEBI:57634"/>
        <dbReference type="ChEBI" id="CHEBI:58225"/>
        <dbReference type="EC" id="5.3.1.9"/>
    </reaction>
</comment>
<comment type="pathway">
    <text evidence="1">Carbohydrate biosynthesis; gluconeogenesis.</text>
</comment>
<comment type="pathway">
    <text evidence="1">Carbohydrate degradation; glycolysis; D-glyceraldehyde 3-phosphate and glycerone phosphate from D-glucose: step 2/4.</text>
</comment>
<comment type="subcellular location">
    <subcellularLocation>
        <location evidence="1">Cytoplasm</location>
    </subcellularLocation>
</comment>
<comment type="similarity">
    <text evidence="1">Belongs to the GPI family.</text>
</comment>
<dbReference type="EC" id="5.3.1.9" evidence="1"/>
<dbReference type="EMBL" id="CP000661">
    <property type="protein sequence ID" value="ABP70669.1"/>
    <property type="molecule type" value="Genomic_DNA"/>
</dbReference>
<dbReference type="SMR" id="A4WTF5"/>
<dbReference type="STRING" id="349102.Rsph17025_1776"/>
<dbReference type="KEGG" id="rsq:Rsph17025_1776"/>
<dbReference type="eggNOG" id="COG0166">
    <property type="taxonomic scope" value="Bacteria"/>
</dbReference>
<dbReference type="HOGENOM" id="CLU_017947_3_1_5"/>
<dbReference type="BioCyc" id="RSPH349102:G1G8M-1832-MONOMER"/>
<dbReference type="UniPathway" id="UPA00109">
    <property type="reaction ID" value="UER00181"/>
</dbReference>
<dbReference type="UniPathway" id="UPA00138"/>
<dbReference type="GO" id="GO:0005829">
    <property type="term" value="C:cytosol"/>
    <property type="evidence" value="ECO:0007669"/>
    <property type="project" value="TreeGrafter"/>
</dbReference>
<dbReference type="GO" id="GO:0097367">
    <property type="term" value="F:carbohydrate derivative binding"/>
    <property type="evidence" value="ECO:0007669"/>
    <property type="project" value="InterPro"/>
</dbReference>
<dbReference type="GO" id="GO:0004347">
    <property type="term" value="F:glucose-6-phosphate isomerase activity"/>
    <property type="evidence" value="ECO:0007669"/>
    <property type="project" value="UniProtKB-UniRule"/>
</dbReference>
<dbReference type="GO" id="GO:0048029">
    <property type="term" value="F:monosaccharide binding"/>
    <property type="evidence" value="ECO:0007669"/>
    <property type="project" value="TreeGrafter"/>
</dbReference>
<dbReference type="GO" id="GO:0006094">
    <property type="term" value="P:gluconeogenesis"/>
    <property type="evidence" value="ECO:0007669"/>
    <property type="project" value="UniProtKB-UniRule"/>
</dbReference>
<dbReference type="GO" id="GO:0051156">
    <property type="term" value="P:glucose 6-phosphate metabolic process"/>
    <property type="evidence" value="ECO:0007669"/>
    <property type="project" value="TreeGrafter"/>
</dbReference>
<dbReference type="GO" id="GO:0006096">
    <property type="term" value="P:glycolytic process"/>
    <property type="evidence" value="ECO:0007669"/>
    <property type="project" value="UniProtKB-UniRule"/>
</dbReference>
<dbReference type="CDD" id="cd05015">
    <property type="entry name" value="SIS_PGI_1"/>
    <property type="match status" value="1"/>
</dbReference>
<dbReference type="CDD" id="cd05016">
    <property type="entry name" value="SIS_PGI_2"/>
    <property type="match status" value="1"/>
</dbReference>
<dbReference type="Gene3D" id="1.10.1390.10">
    <property type="match status" value="1"/>
</dbReference>
<dbReference type="Gene3D" id="3.40.50.10490">
    <property type="entry name" value="Glucose-6-phosphate isomerase like protein, domain 1"/>
    <property type="match status" value="2"/>
</dbReference>
<dbReference type="HAMAP" id="MF_00473">
    <property type="entry name" value="G6P_isomerase"/>
    <property type="match status" value="1"/>
</dbReference>
<dbReference type="InterPro" id="IPR001672">
    <property type="entry name" value="G6P_Isomerase"/>
</dbReference>
<dbReference type="InterPro" id="IPR023096">
    <property type="entry name" value="G6P_Isomerase_C"/>
</dbReference>
<dbReference type="InterPro" id="IPR018189">
    <property type="entry name" value="Phosphoglucose_isomerase_CS"/>
</dbReference>
<dbReference type="InterPro" id="IPR046348">
    <property type="entry name" value="SIS_dom_sf"/>
</dbReference>
<dbReference type="InterPro" id="IPR035476">
    <property type="entry name" value="SIS_PGI_1"/>
</dbReference>
<dbReference type="InterPro" id="IPR035482">
    <property type="entry name" value="SIS_PGI_2"/>
</dbReference>
<dbReference type="NCBIfam" id="NF001211">
    <property type="entry name" value="PRK00179.1"/>
    <property type="match status" value="1"/>
</dbReference>
<dbReference type="PANTHER" id="PTHR11469">
    <property type="entry name" value="GLUCOSE-6-PHOSPHATE ISOMERASE"/>
    <property type="match status" value="1"/>
</dbReference>
<dbReference type="PANTHER" id="PTHR11469:SF1">
    <property type="entry name" value="GLUCOSE-6-PHOSPHATE ISOMERASE"/>
    <property type="match status" value="1"/>
</dbReference>
<dbReference type="Pfam" id="PF00342">
    <property type="entry name" value="PGI"/>
    <property type="match status" value="1"/>
</dbReference>
<dbReference type="PRINTS" id="PR00662">
    <property type="entry name" value="G6PISOMERASE"/>
</dbReference>
<dbReference type="SUPFAM" id="SSF53697">
    <property type="entry name" value="SIS domain"/>
    <property type="match status" value="1"/>
</dbReference>
<dbReference type="PROSITE" id="PS00765">
    <property type="entry name" value="P_GLUCOSE_ISOMERASE_1"/>
    <property type="match status" value="1"/>
</dbReference>
<dbReference type="PROSITE" id="PS00174">
    <property type="entry name" value="P_GLUCOSE_ISOMERASE_2"/>
    <property type="match status" value="1"/>
</dbReference>
<dbReference type="PROSITE" id="PS51463">
    <property type="entry name" value="P_GLUCOSE_ISOMERASE_3"/>
    <property type="match status" value="1"/>
</dbReference>
<evidence type="ECO:0000255" key="1">
    <source>
        <dbReference type="HAMAP-Rule" id="MF_00473"/>
    </source>
</evidence>
<reference key="1">
    <citation type="submission" date="2007-04" db="EMBL/GenBank/DDBJ databases">
        <title>Complete sequence of chromosome of Rhodobacter sphaeroides ATCC 17025.</title>
        <authorList>
            <consortium name="US DOE Joint Genome Institute"/>
            <person name="Copeland A."/>
            <person name="Lucas S."/>
            <person name="Lapidus A."/>
            <person name="Barry K."/>
            <person name="Detter J.C."/>
            <person name="Glavina del Rio T."/>
            <person name="Hammon N."/>
            <person name="Israni S."/>
            <person name="Dalin E."/>
            <person name="Tice H."/>
            <person name="Pitluck S."/>
            <person name="Chertkov O."/>
            <person name="Brettin T."/>
            <person name="Bruce D."/>
            <person name="Han C."/>
            <person name="Schmutz J."/>
            <person name="Larimer F."/>
            <person name="Land M."/>
            <person name="Hauser L."/>
            <person name="Kyrpides N."/>
            <person name="Kim E."/>
            <person name="Richardson P."/>
            <person name="Mackenzie C."/>
            <person name="Choudhary M."/>
            <person name="Donohue T.J."/>
            <person name="Kaplan S."/>
        </authorList>
    </citation>
    <scope>NUCLEOTIDE SEQUENCE [LARGE SCALE GENOMIC DNA]</scope>
    <source>
        <strain>ATCC 17025 / ATH 2.4.3</strain>
    </source>
</reference>